<evidence type="ECO:0000250" key="1"/>
<evidence type="ECO:0000255" key="2"/>
<evidence type="ECO:0000305" key="3"/>
<reference key="1">
    <citation type="journal article" date="2001" name="Science">
        <title>Mechanisms of evolution in Rickettsia conorii and R. prowazekii.</title>
        <authorList>
            <person name="Ogata H."/>
            <person name="Audic S."/>
            <person name="Renesto-Audiffren P."/>
            <person name="Fournier P.-E."/>
            <person name="Barbe V."/>
            <person name="Samson D."/>
            <person name="Roux V."/>
            <person name="Cossart P."/>
            <person name="Weissenbach J."/>
            <person name="Claverie J.-M."/>
            <person name="Raoult D."/>
        </authorList>
    </citation>
    <scope>NUCLEOTIDE SEQUENCE [LARGE SCALE GENOMIC DNA]</scope>
    <source>
        <strain>ATCC VR-613 / Malish 7</strain>
    </source>
</reference>
<accession>Q92ID9</accession>
<feature type="chain" id="PRO_0000118700" description="NADH-quinone oxidoreductase subunit E">
    <location>
        <begin position="1"/>
        <end position="167"/>
    </location>
</feature>
<feature type="binding site" evidence="2">
    <location>
        <position position="91"/>
    </location>
    <ligand>
        <name>[2Fe-2S] cluster</name>
        <dbReference type="ChEBI" id="CHEBI:190135"/>
    </ligand>
</feature>
<feature type="binding site" evidence="2">
    <location>
        <position position="96"/>
    </location>
    <ligand>
        <name>[2Fe-2S] cluster</name>
        <dbReference type="ChEBI" id="CHEBI:190135"/>
    </ligand>
</feature>
<feature type="binding site" evidence="2">
    <location>
        <position position="132"/>
    </location>
    <ligand>
        <name>[2Fe-2S] cluster</name>
        <dbReference type="ChEBI" id="CHEBI:190135"/>
    </ligand>
</feature>
<feature type="binding site" evidence="2">
    <location>
        <position position="136"/>
    </location>
    <ligand>
        <name>[2Fe-2S] cluster</name>
        <dbReference type="ChEBI" id="CHEBI:190135"/>
    </ligand>
</feature>
<keyword id="KW-0001">2Fe-2S</keyword>
<keyword id="KW-0408">Iron</keyword>
<keyword id="KW-0411">Iron-sulfur</keyword>
<keyword id="KW-0479">Metal-binding</keyword>
<keyword id="KW-0520">NAD</keyword>
<keyword id="KW-0874">Quinone</keyword>
<keyword id="KW-1278">Translocase</keyword>
<name>NUOE_RICCN</name>
<gene>
    <name type="primary">nuoE</name>
    <name type="ordered locus">RC0481</name>
</gene>
<dbReference type="EC" id="7.1.1.-"/>
<dbReference type="EMBL" id="AE006914">
    <property type="protein sequence ID" value="AAL03019.1"/>
    <property type="molecule type" value="Genomic_DNA"/>
</dbReference>
<dbReference type="PIR" id="A97760">
    <property type="entry name" value="A97760"/>
</dbReference>
<dbReference type="RefSeq" id="WP_010977123.1">
    <property type="nucleotide sequence ID" value="NC_003103.1"/>
</dbReference>
<dbReference type="SMR" id="Q92ID9"/>
<dbReference type="GeneID" id="928706"/>
<dbReference type="KEGG" id="rco:RC0481"/>
<dbReference type="PATRIC" id="fig|272944.4.peg.551"/>
<dbReference type="HOGENOM" id="CLU_054362_2_0_5"/>
<dbReference type="Proteomes" id="UP000000816">
    <property type="component" value="Chromosome"/>
</dbReference>
<dbReference type="GO" id="GO:0051537">
    <property type="term" value="F:2 iron, 2 sulfur cluster binding"/>
    <property type="evidence" value="ECO:0007669"/>
    <property type="project" value="UniProtKB-KW"/>
</dbReference>
<dbReference type="GO" id="GO:0046872">
    <property type="term" value="F:metal ion binding"/>
    <property type="evidence" value="ECO:0007669"/>
    <property type="project" value="UniProtKB-KW"/>
</dbReference>
<dbReference type="GO" id="GO:0003954">
    <property type="term" value="F:NADH dehydrogenase activity"/>
    <property type="evidence" value="ECO:0007669"/>
    <property type="project" value="TreeGrafter"/>
</dbReference>
<dbReference type="GO" id="GO:0048038">
    <property type="term" value="F:quinone binding"/>
    <property type="evidence" value="ECO:0007669"/>
    <property type="project" value="UniProtKB-KW"/>
</dbReference>
<dbReference type="CDD" id="cd03064">
    <property type="entry name" value="TRX_Fd_NuoE"/>
    <property type="match status" value="1"/>
</dbReference>
<dbReference type="FunFam" id="3.40.30.10:FF:000022">
    <property type="entry name" value="NADH dehydrogenase flavoprotein 2, mitochondrial"/>
    <property type="match status" value="1"/>
</dbReference>
<dbReference type="FunFam" id="1.10.10.1590:FF:000001">
    <property type="entry name" value="NADH-quinone oxidoreductase subunit E"/>
    <property type="match status" value="1"/>
</dbReference>
<dbReference type="Gene3D" id="3.40.30.10">
    <property type="entry name" value="Glutaredoxin"/>
    <property type="match status" value="1"/>
</dbReference>
<dbReference type="Gene3D" id="1.10.10.1590">
    <property type="entry name" value="NADH-quinone oxidoreductase subunit E"/>
    <property type="match status" value="1"/>
</dbReference>
<dbReference type="InterPro" id="IPR002023">
    <property type="entry name" value="NuoE-like"/>
</dbReference>
<dbReference type="InterPro" id="IPR042128">
    <property type="entry name" value="NuoE_dom"/>
</dbReference>
<dbReference type="InterPro" id="IPR041921">
    <property type="entry name" value="NuoE_N"/>
</dbReference>
<dbReference type="InterPro" id="IPR036249">
    <property type="entry name" value="Thioredoxin-like_sf"/>
</dbReference>
<dbReference type="NCBIfam" id="TIGR01958">
    <property type="entry name" value="nuoE_fam"/>
    <property type="match status" value="1"/>
</dbReference>
<dbReference type="NCBIfam" id="NF005725">
    <property type="entry name" value="PRK07539.1-5"/>
    <property type="match status" value="1"/>
</dbReference>
<dbReference type="PANTHER" id="PTHR10371:SF3">
    <property type="entry name" value="NADH DEHYDROGENASE [UBIQUINONE] FLAVOPROTEIN 2, MITOCHONDRIAL"/>
    <property type="match status" value="1"/>
</dbReference>
<dbReference type="PANTHER" id="PTHR10371">
    <property type="entry name" value="NADH DEHYDROGENASE UBIQUINONE FLAVOPROTEIN 2, MITOCHONDRIAL"/>
    <property type="match status" value="1"/>
</dbReference>
<dbReference type="Pfam" id="PF01257">
    <property type="entry name" value="2Fe-2S_thioredx"/>
    <property type="match status" value="1"/>
</dbReference>
<dbReference type="PIRSF" id="PIRSF000216">
    <property type="entry name" value="NADH_DH_24kDa"/>
    <property type="match status" value="1"/>
</dbReference>
<dbReference type="SUPFAM" id="SSF52833">
    <property type="entry name" value="Thioredoxin-like"/>
    <property type="match status" value="1"/>
</dbReference>
<dbReference type="PROSITE" id="PS01099">
    <property type="entry name" value="COMPLEX1_24K"/>
    <property type="match status" value="1"/>
</dbReference>
<protein>
    <recommendedName>
        <fullName>NADH-quinone oxidoreductase subunit E</fullName>
        <ecNumber>7.1.1.-</ecNumber>
    </recommendedName>
    <alternativeName>
        <fullName>NADH dehydrogenase I subunit E</fullName>
    </alternativeName>
    <alternativeName>
        <fullName>NDH-1 subunit E</fullName>
    </alternativeName>
</protein>
<organism>
    <name type="scientific">Rickettsia conorii (strain ATCC VR-613 / Malish 7)</name>
    <dbReference type="NCBI Taxonomy" id="272944"/>
    <lineage>
        <taxon>Bacteria</taxon>
        <taxon>Pseudomonadati</taxon>
        <taxon>Pseudomonadota</taxon>
        <taxon>Alphaproteobacteria</taxon>
        <taxon>Rickettsiales</taxon>
        <taxon>Rickettsiaceae</taxon>
        <taxon>Rickettsieae</taxon>
        <taxon>Rickettsia</taxon>
        <taxon>spotted fever group</taxon>
    </lineage>
</organism>
<proteinExistence type="inferred from homology"/>
<comment type="function">
    <text evidence="1">NDH-1 shuttles electrons from NADH, via FMN and iron-sulfur (Fe-S) centers, to quinones in the respiratory chain. Couples the redox reaction to proton translocation (for every two electrons transferred, four hydrogen ions are translocated across the cytoplasmic membrane), and thus conserves the redox energy in a proton gradient (By similarity).</text>
</comment>
<comment type="catalytic activity">
    <reaction>
        <text>a quinone + NADH + 5 H(+)(in) = a quinol + NAD(+) + 4 H(+)(out)</text>
        <dbReference type="Rhea" id="RHEA:57888"/>
        <dbReference type="ChEBI" id="CHEBI:15378"/>
        <dbReference type="ChEBI" id="CHEBI:24646"/>
        <dbReference type="ChEBI" id="CHEBI:57540"/>
        <dbReference type="ChEBI" id="CHEBI:57945"/>
        <dbReference type="ChEBI" id="CHEBI:132124"/>
    </reaction>
</comment>
<comment type="cofactor">
    <cofactor evidence="3">
        <name>[2Fe-2S] cluster</name>
        <dbReference type="ChEBI" id="CHEBI:190135"/>
    </cofactor>
    <text evidence="3">Binds 1 [2Fe-2S] cluster.</text>
</comment>
<comment type="similarity">
    <text evidence="3">Belongs to the complex I 24 kDa subunit family.</text>
</comment>
<sequence>MNTKITNFTFDKKNLNLAEEIIKKYPPHGKRSAILPLLDLAQRQNGGWLPVPAIEYVANMLAMPYIRAYEVATFYTMFNLKRVGKYHIQVCTTTPCWLRGSDDIMKICEKKLGVKLKETTEDQKFTLSEIECLGACVNAPVVQINDDYYEDLTQDKMGKIIDKLQND</sequence>